<name>RS19_ANAD2</name>
<evidence type="ECO:0000255" key="1">
    <source>
        <dbReference type="HAMAP-Rule" id="MF_00531"/>
    </source>
</evidence>
<evidence type="ECO:0000256" key="2">
    <source>
        <dbReference type="SAM" id="MobiDB-lite"/>
    </source>
</evidence>
<evidence type="ECO:0000305" key="3"/>
<protein>
    <recommendedName>
        <fullName evidence="1">Small ribosomal subunit protein uS19</fullName>
    </recommendedName>
    <alternativeName>
        <fullName evidence="3">30S ribosomal protein S19</fullName>
    </alternativeName>
</protein>
<feature type="chain" id="PRO_1000146360" description="Small ribosomal subunit protein uS19">
    <location>
        <begin position="1"/>
        <end position="98"/>
    </location>
</feature>
<feature type="region of interest" description="Disordered" evidence="2">
    <location>
        <begin position="1"/>
        <end position="30"/>
    </location>
</feature>
<feature type="region of interest" description="Disordered" evidence="2">
    <location>
        <begin position="78"/>
        <end position="98"/>
    </location>
</feature>
<feature type="compositionally biased region" description="Basic and acidic residues" evidence="2">
    <location>
        <begin position="9"/>
        <end position="24"/>
    </location>
</feature>
<comment type="function">
    <text evidence="1">Protein S19 forms a complex with S13 that binds strongly to the 16S ribosomal RNA.</text>
</comment>
<comment type="similarity">
    <text evidence="1">Belongs to the universal ribosomal protein uS19 family.</text>
</comment>
<reference key="1">
    <citation type="submission" date="2009-01" db="EMBL/GenBank/DDBJ databases">
        <title>Complete sequence of Anaeromyxobacter dehalogenans 2CP-1.</title>
        <authorList>
            <person name="Lucas S."/>
            <person name="Copeland A."/>
            <person name="Lapidus A."/>
            <person name="Glavina del Rio T."/>
            <person name="Dalin E."/>
            <person name="Tice H."/>
            <person name="Bruce D."/>
            <person name="Goodwin L."/>
            <person name="Pitluck S."/>
            <person name="Saunders E."/>
            <person name="Brettin T."/>
            <person name="Detter J.C."/>
            <person name="Han C."/>
            <person name="Larimer F."/>
            <person name="Land M."/>
            <person name="Hauser L."/>
            <person name="Kyrpides N."/>
            <person name="Ovchinnikova G."/>
            <person name="Beliaev A.S."/>
            <person name="Richardson P."/>
        </authorList>
    </citation>
    <scope>NUCLEOTIDE SEQUENCE [LARGE SCALE GENOMIC DNA]</scope>
    <source>
        <strain>2CP-1 / ATCC BAA-258</strain>
    </source>
</reference>
<accession>B8J864</accession>
<gene>
    <name evidence="1" type="primary">rpsS</name>
    <name type="ordered locus">A2cp1_2022</name>
</gene>
<dbReference type="EMBL" id="CP001359">
    <property type="protein sequence ID" value="ACL65363.1"/>
    <property type="molecule type" value="Genomic_DNA"/>
</dbReference>
<dbReference type="RefSeq" id="WP_012525977.1">
    <property type="nucleotide sequence ID" value="NC_011891.1"/>
</dbReference>
<dbReference type="SMR" id="B8J864"/>
<dbReference type="KEGG" id="acp:A2cp1_2022"/>
<dbReference type="HOGENOM" id="CLU_144911_0_1_7"/>
<dbReference type="Proteomes" id="UP000007089">
    <property type="component" value="Chromosome"/>
</dbReference>
<dbReference type="GO" id="GO:0005737">
    <property type="term" value="C:cytoplasm"/>
    <property type="evidence" value="ECO:0007669"/>
    <property type="project" value="UniProtKB-ARBA"/>
</dbReference>
<dbReference type="GO" id="GO:0015935">
    <property type="term" value="C:small ribosomal subunit"/>
    <property type="evidence" value="ECO:0007669"/>
    <property type="project" value="InterPro"/>
</dbReference>
<dbReference type="GO" id="GO:0019843">
    <property type="term" value="F:rRNA binding"/>
    <property type="evidence" value="ECO:0007669"/>
    <property type="project" value="UniProtKB-UniRule"/>
</dbReference>
<dbReference type="GO" id="GO:0003735">
    <property type="term" value="F:structural constituent of ribosome"/>
    <property type="evidence" value="ECO:0007669"/>
    <property type="project" value="InterPro"/>
</dbReference>
<dbReference type="GO" id="GO:0000028">
    <property type="term" value="P:ribosomal small subunit assembly"/>
    <property type="evidence" value="ECO:0007669"/>
    <property type="project" value="TreeGrafter"/>
</dbReference>
<dbReference type="GO" id="GO:0006412">
    <property type="term" value="P:translation"/>
    <property type="evidence" value="ECO:0007669"/>
    <property type="project" value="UniProtKB-UniRule"/>
</dbReference>
<dbReference type="FunFam" id="3.30.860.10:FF:000001">
    <property type="entry name" value="30S ribosomal protein S19"/>
    <property type="match status" value="1"/>
</dbReference>
<dbReference type="Gene3D" id="3.30.860.10">
    <property type="entry name" value="30s Ribosomal Protein S19, Chain A"/>
    <property type="match status" value="1"/>
</dbReference>
<dbReference type="HAMAP" id="MF_00531">
    <property type="entry name" value="Ribosomal_uS19"/>
    <property type="match status" value="1"/>
</dbReference>
<dbReference type="InterPro" id="IPR002222">
    <property type="entry name" value="Ribosomal_uS19"/>
</dbReference>
<dbReference type="InterPro" id="IPR005732">
    <property type="entry name" value="Ribosomal_uS19_bac-type"/>
</dbReference>
<dbReference type="InterPro" id="IPR020934">
    <property type="entry name" value="Ribosomal_uS19_CS"/>
</dbReference>
<dbReference type="InterPro" id="IPR023575">
    <property type="entry name" value="Ribosomal_uS19_SF"/>
</dbReference>
<dbReference type="NCBIfam" id="TIGR01050">
    <property type="entry name" value="rpsS_bact"/>
    <property type="match status" value="1"/>
</dbReference>
<dbReference type="PANTHER" id="PTHR11880">
    <property type="entry name" value="RIBOSOMAL PROTEIN S19P FAMILY MEMBER"/>
    <property type="match status" value="1"/>
</dbReference>
<dbReference type="PANTHER" id="PTHR11880:SF8">
    <property type="entry name" value="SMALL RIBOSOMAL SUBUNIT PROTEIN US19M"/>
    <property type="match status" value="1"/>
</dbReference>
<dbReference type="Pfam" id="PF00203">
    <property type="entry name" value="Ribosomal_S19"/>
    <property type="match status" value="1"/>
</dbReference>
<dbReference type="PIRSF" id="PIRSF002144">
    <property type="entry name" value="Ribosomal_S19"/>
    <property type="match status" value="1"/>
</dbReference>
<dbReference type="PRINTS" id="PR00975">
    <property type="entry name" value="RIBOSOMALS19"/>
</dbReference>
<dbReference type="SUPFAM" id="SSF54570">
    <property type="entry name" value="Ribosomal protein S19"/>
    <property type="match status" value="1"/>
</dbReference>
<dbReference type="PROSITE" id="PS00323">
    <property type="entry name" value="RIBOSOMAL_S19"/>
    <property type="match status" value="1"/>
</dbReference>
<proteinExistence type="inferred from homology"/>
<sequence>MARSIKKGPFADKHLTKKVEDANKGNKKSVIKTWSRRSTILPDFVGHTFAVHNGRKFVPVFVTENMVGHKLGEFAPTRTFHGHSAEKKAAAAPAPAKK</sequence>
<organism>
    <name type="scientific">Anaeromyxobacter dehalogenans (strain 2CP-1 / ATCC BAA-258)</name>
    <dbReference type="NCBI Taxonomy" id="455488"/>
    <lineage>
        <taxon>Bacteria</taxon>
        <taxon>Pseudomonadati</taxon>
        <taxon>Myxococcota</taxon>
        <taxon>Myxococcia</taxon>
        <taxon>Myxococcales</taxon>
        <taxon>Cystobacterineae</taxon>
        <taxon>Anaeromyxobacteraceae</taxon>
        <taxon>Anaeromyxobacter</taxon>
    </lineage>
</organism>
<keyword id="KW-0687">Ribonucleoprotein</keyword>
<keyword id="KW-0689">Ribosomal protein</keyword>
<keyword id="KW-0694">RNA-binding</keyword>
<keyword id="KW-0699">rRNA-binding</keyword>